<gene>
    <name evidence="11" type="primary">ZFP57</name>
    <name type="synonym">C6orf40</name>
    <name type="synonym">ZNF698</name>
</gene>
<comment type="function">
    <text evidence="2 7 8">Transcription regulator required to maintain maternal and paternal gene imprinting, a process by which gene expression is restricted in a parent of origin-specific manner by epigenetic modification of genomic DNA and chromatin, including DNA methylation. Acts by controlling DNA methylation during the earliest multicellular stages of development at multiple imprinting control regions (ICRs) (PubMed:18622393, PubMed:30602440). Acts together with ZNF445, but ZNF445 seems to be the major factor in human early embryonic imprinting maintenance. In contrast, in mice, ZFP57 plays the predominant role in imprinting maintenance (PubMed:30602440). Required for the establishment of maternal methylation imprints at SNRPN locus. Acts as a transcriptional repressor in Schwann cells. Binds to a 5'-TGCCGC-3' consensus sequence and recognizes the methylated CpG within this element (By similarity).</text>
</comment>
<comment type="interaction">
    <interactant intactId="EBI-13623587">
        <id>Q9NU63</id>
    </interactant>
    <interactant intactId="EBI-78139">
        <id>Q13263</id>
        <label>TRIM28</label>
    </interactant>
    <organismsDiffer>false</organismsDiffer>
    <experiments>2</experiments>
</comment>
<comment type="interaction">
    <interactant intactId="EBI-12879708">
        <id>Q9NU63-3</id>
    </interactant>
    <interactant intactId="EBI-10292696">
        <id>Q96Q77</id>
        <label>CIB3</label>
    </interactant>
    <organismsDiffer>false</organismsDiffer>
    <experiments>3</experiments>
</comment>
<comment type="interaction">
    <interactant intactId="EBI-12879708">
        <id>Q9NU63-3</id>
    </interactant>
    <interactant intactId="EBI-739789">
        <id>Q92997</id>
        <label>DVL3</label>
    </interactant>
    <organismsDiffer>false</organismsDiffer>
    <experiments>3</experiments>
</comment>
<comment type="interaction">
    <interactant intactId="EBI-12879708">
        <id>Q9NU63-3</id>
    </interactant>
    <interactant intactId="EBI-489887">
        <id>P50402</id>
        <label>EMD</label>
    </interactant>
    <organismsDiffer>false</organismsDiffer>
    <experiments>3</experiments>
</comment>
<comment type="interaction">
    <interactant intactId="EBI-12879708">
        <id>Q9NU63-3</id>
    </interactant>
    <interactant intactId="EBI-2556193">
        <id>Q63ZY3</id>
        <label>KANK2</label>
    </interactant>
    <organismsDiffer>false</organismsDiffer>
    <experiments>3</experiments>
</comment>
<comment type="interaction">
    <interactant intactId="EBI-12879708">
        <id>Q9NU63-3</id>
    </interactant>
    <interactant intactId="EBI-2340269">
        <id>Q13064</id>
        <label>MKRN3</label>
    </interactant>
    <organismsDiffer>false</organismsDiffer>
    <experiments>3</experiments>
</comment>
<comment type="interaction">
    <interactant intactId="EBI-12879708">
        <id>Q9NU63-3</id>
    </interactant>
    <interactant intactId="EBI-744248">
        <id>P40692</id>
        <label>MLH1</label>
    </interactant>
    <organismsDiffer>false</organismsDiffer>
    <experiments>3</experiments>
</comment>
<comment type="interaction">
    <interactant intactId="EBI-12879708">
        <id>Q9NU63-3</id>
    </interactant>
    <interactant intactId="EBI-1055079">
        <id>O15160</id>
        <label>POLR1C</label>
    </interactant>
    <organismsDiffer>false</organismsDiffer>
    <experiments>3</experiments>
</comment>
<comment type="interaction">
    <interactant intactId="EBI-12879708">
        <id>Q9NU63-3</id>
    </interactant>
    <interactant intactId="EBI-2510804">
        <id>Q5VVQ6</id>
        <label>YOD1</label>
    </interactant>
    <organismsDiffer>false</organismsDiffer>
    <experiments>3</experiments>
</comment>
<comment type="subcellular location">
    <subcellularLocation>
        <location evidence="8">Nucleus</location>
    </subcellularLocation>
    <text evidence="8">Binds various differentially methylated regions (DMR).</text>
</comment>
<comment type="alternative products">
    <event type="alternative splicing"/>
    <isoform>
        <id>Q9NU63-1</id>
        <name>1</name>
        <sequence type="displayed"/>
    </isoform>
    <isoform>
        <id>Q9NU63-2</id>
        <name>2</name>
        <sequence type="described" ref="VSP_026329 VSP_026330"/>
    </isoform>
    <isoform>
        <id>Q9NU63-3</id>
        <name>3</name>
        <sequence type="described" ref="VSP_036659 VSP_026330"/>
    </isoform>
</comment>
<comment type="developmental stage">
    <text evidence="8">In contrast to mice, transcripts are undetectable in the oocyte and during the earliest stages of embryonic development, increasing only after zygotic genome activation.</text>
</comment>
<comment type="domain">
    <text evidence="2">The KRAB domain is required for function as transcriptional repressor.</text>
</comment>
<comment type="domain">
    <text evidence="2">Zinc fingers 3 and 4 mediate recognition of the target element, ZF3 interacting with the 5' half (TGC) and ZF4 interacting with the 3' half (CGC).</text>
</comment>
<comment type="disease" evidence="7">
    <disease id="DI-02380">
        <name>Diabetes mellitus, transient neonatal, 1</name>
        <acronym>TNDM1</acronym>
        <description>An autosomal dominant form of diabetes mellitus defined by the onset of mild-to-severe hyperglycemia within the first month of life. In about half of the neonates, diabetes is transient and resolves at a median age of 3 months, whereas the rest have a permanent form of diabetes.</description>
        <dbReference type="MIM" id="601410"/>
    </disease>
    <text>The disease is caused by variants affecting the gene represented in this entry.</text>
</comment>
<comment type="similarity">
    <text evidence="10">Belongs to the krueppel C2H2-type zinc-finger protein family. ZFP57 subfamily.</text>
</comment>
<feature type="chain" id="PRO_0000291964" description="Zinc finger protein 57 homolog">
    <location>
        <begin position="1"/>
        <end position="452"/>
    </location>
</feature>
<feature type="domain" description="KRAB" evidence="4">
    <location>
        <begin position="16"/>
        <end position="88"/>
    </location>
</feature>
<feature type="zinc finger region" description="C2H2-type 1" evidence="3">
    <location>
        <begin position="91"/>
        <end position="113"/>
    </location>
</feature>
<feature type="zinc finger region" description="C2H2-type 2" evidence="3">
    <location>
        <begin position="119"/>
        <end position="141"/>
    </location>
</feature>
<feature type="zinc finger region" description="C2H2-type 3" evidence="3">
    <location>
        <begin position="147"/>
        <end position="169"/>
    </location>
</feature>
<feature type="zinc finger region" description="C2H2-type 4" evidence="3">
    <location>
        <begin position="175"/>
        <end position="197"/>
    </location>
</feature>
<feature type="zinc finger region" description="C2H2-type 5" evidence="3">
    <location>
        <begin position="300"/>
        <end position="322"/>
    </location>
</feature>
<feature type="zinc finger region" description="C2H2-type 6" evidence="3">
    <location>
        <begin position="328"/>
        <end position="350"/>
    </location>
</feature>
<feature type="zinc finger region" description="C2H2-type 7; degenerate" evidence="3">
    <location>
        <begin position="356"/>
        <end position="378"/>
    </location>
</feature>
<feature type="region of interest" description="Disordered" evidence="5">
    <location>
        <begin position="410"/>
        <end position="452"/>
    </location>
</feature>
<feature type="compositionally biased region" description="Basic and acidic residues" evidence="5">
    <location>
        <begin position="433"/>
        <end position="444"/>
    </location>
</feature>
<feature type="site" description="Crucial for 5-methylcytosine recognition" evidence="1">
    <location>
        <position position="185"/>
    </location>
</feature>
<feature type="splice variant" id="VSP_026329" description="In isoform 2." evidence="10">
    <original>MAAGEPRSLLFFQ</original>
    <variation>MFEQLKPIEPRDCWREARVKK</variation>
    <location>
        <begin position="1"/>
        <end position="13"/>
    </location>
</feature>
<feature type="splice variant" id="VSP_036659" description="In isoform 3." evidence="9">
    <original>MAAGEPRSLLFFQ</original>
    <variation>MFEQLKPIEPVQKTLPWVGEVAATLQEAMKRDCWREARVKK</variation>
    <location>
        <begin position="1"/>
        <end position="13"/>
    </location>
</feature>
<feature type="splice variant" id="VSP_026330" description="In isoform 2 and isoform 3." evidence="9">
    <original>E</original>
    <variation>EFVHLPNTEGLSEGKKKELREQHPSLRDEGTSDDKVFLACRGAGQCPLSAPAGTMDR</variation>
    <location>
        <position position="78"/>
    </location>
</feature>
<feature type="sequence variant" id="VAR_032902" description="In dbSNP:rs9461544.">
    <original>N</original>
    <variation>S</variation>
    <location>
        <position position="114"/>
    </location>
</feature>
<feature type="sequence variant" id="VAR_054771" description="In TNDM1; dbSNP:rs199589695." evidence="7">
    <original>R</original>
    <variation>H</variation>
    <location>
        <position position="166"/>
    </location>
</feature>
<feature type="sequence variant" id="VAR_054772" description="In TNDM1; dbSNP:rs78378398." evidence="7">
    <original>H</original>
    <variation>N</variation>
    <location>
        <position position="193"/>
    </location>
</feature>
<feature type="sequence variant" id="VAR_032903" description="In dbSNP:rs2535241." evidence="6">
    <original>D</original>
    <variation>V</variation>
    <location>
        <position position="284"/>
    </location>
</feature>
<feature type="sequence variant" id="VAR_054773" description="In TNDM1; dbSNP:rs79020217." evidence="7">
    <original>H</original>
    <variation>D</variation>
    <location>
        <position position="374"/>
    </location>
</feature>
<feature type="sequence conflict" description="In Ref. 2; AAI57879." evidence="10" ref="2">
    <original>L</original>
    <variation>F</variation>
    <location>
        <position position="151"/>
    </location>
</feature>
<evidence type="ECO:0000250" key="1"/>
<evidence type="ECO:0000250" key="2">
    <source>
        <dbReference type="UniProtKB" id="Q8C6P8"/>
    </source>
</evidence>
<evidence type="ECO:0000255" key="3">
    <source>
        <dbReference type="PROSITE-ProRule" id="PRU00042"/>
    </source>
</evidence>
<evidence type="ECO:0000255" key="4">
    <source>
        <dbReference type="PROSITE-ProRule" id="PRU00119"/>
    </source>
</evidence>
<evidence type="ECO:0000256" key="5">
    <source>
        <dbReference type="SAM" id="MobiDB-lite"/>
    </source>
</evidence>
<evidence type="ECO:0000269" key="6">
    <source>
    </source>
</evidence>
<evidence type="ECO:0000269" key="7">
    <source>
    </source>
</evidence>
<evidence type="ECO:0000269" key="8">
    <source>
    </source>
</evidence>
<evidence type="ECO:0000303" key="9">
    <source>
    </source>
</evidence>
<evidence type="ECO:0000305" key="10"/>
<evidence type="ECO:0000312" key="11">
    <source>
        <dbReference type="HGNC" id="HGNC:18791"/>
    </source>
</evidence>
<protein>
    <recommendedName>
        <fullName evidence="10">Zinc finger protein 57 homolog</fullName>
        <shortName>Zfp-57</shortName>
    </recommendedName>
    <alternativeName>
        <fullName>Zinc finger protein 698</fullName>
    </alternativeName>
</protein>
<organism>
    <name type="scientific">Homo sapiens</name>
    <name type="common">Human</name>
    <dbReference type="NCBI Taxonomy" id="9606"/>
    <lineage>
        <taxon>Eukaryota</taxon>
        <taxon>Metazoa</taxon>
        <taxon>Chordata</taxon>
        <taxon>Craniata</taxon>
        <taxon>Vertebrata</taxon>
        <taxon>Euteleostomi</taxon>
        <taxon>Mammalia</taxon>
        <taxon>Eutheria</taxon>
        <taxon>Euarchontoglires</taxon>
        <taxon>Primates</taxon>
        <taxon>Haplorrhini</taxon>
        <taxon>Catarrhini</taxon>
        <taxon>Hominidae</taxon>
        <taxon>Homo</taxon>
    </lineage>
</organism>
<name>ZFP57_HUMAN</name>
<accession>Q9NU63</accession>
<accession>B0S894</accession>
<accession>B0V254</accession>
<accession>B2RXJ7</accession>
<accession>Q5SSB1</accession>
<dbReference type="EMBL" id="AL050328">
    <property type="protein sequence ID" value="CAB89275.2"/>
    <property type="molecule type" value="Genomic_DNA"/>
</dbReference>
<dbReference type="EMBL" id="AL645936">
    <property type="status" value="NOT_ANNOTATED_CDS"/>
    <property type="molecule type" value="Genomic_DNA"/>
</dbReference>
<dbReference type="EMBL" id="AL669813">
    <property type="status" value="NOT_ANNOTATED_CDS"/>
    <property type="molecule type" value="Genomic_DNA"/>
</dbReference>
<dbReference type="EMBL" id="AL929591">
    <property type="status" value="NOT_ANNOTATED_CDS"/>
    <property type="molecule type" value="Genomic_DNA"/>
</dbReference>
<dbReference type="EMBL" id="BX120002">
    <property type="status" value="NOT_ANNOTATED_CDS"/>
    <property type="molecule type" value="Genomic_DNA"/>
</dbReference>
<dbReference type="EMBL" id="BX927250">
    <property type="status" value="NOT_ANNOTATED_CDS"/>
    <property type="molecule type" value="Genomic_DNA"/>
</dbReference>
<dbReference type="EMBL" id="CR388408">
    <property type="status" value="NOT_ANNOTATED_CDS"/>
    <property type="molecule type" value="Genomic_DNA"/>
</dbReference>
<dbReference type="EMBL" id="CR759766">
    <property type="status" value="NOT_ANNOTATED_CDS"/>
    <property type="molecule type" value="Genomic_DNA"/>
</dbReference>
<dbReference type="EMBL" id="CR936483">
    <property type="status" value="NOT_ANNOTATED_CDS"/>
    <property type="molecule type" value="Genomic_DNA"/>
</dbReference>
<dbReference type="EMBL" id="BC157878">
    <property type="protein sequence ID" value="AAI57879.1"/>
    <property type="molecule type" value="mRNA"/>
</dbReference>
<dbReference type="CCDS" id="CCDS43436.2">
    <molecule id="Q9NU63-3"/>
</dbReference>
<dbReference type="RefSeq" id="NP_001103279.2">
    <molecule id="Q9NU63-3"/>
    <property type="nucleotide sequence ID" value="NM_001109809.5"/>
</dbReference>
<dbReference type="SMR" id="Q9NU63"/>
<dbReference type="BioGRID" id="131375">
    <property type="interactions" value="15"/>
</dbReference>
<dbReference type="IntAct" id="Q9NU63">
    <property type="interactions" value="23"/>
</dbReference>
<dbReference type="MINT" id="Q9NU63"/>
<dbReference type="STRING" id="9606.ENSP00000418259"/>
<dbReference type="iPTMnet" id="Q9NU63"/>
<dbReference type="PhosphoSitePlus" id="Q9NU63"/>
<dbReference type="BioMuta" id="ZFP57"/>
<dbReference type="DMDM" id="150416327"/>
<dbReference type="MassIVE" id="Q9NU63"/>
<dbReference type="PeptideAtlas" id="Q9NU63"/>
<dbReference type="ProteomicsDB" id="82655">
    <molecule id="Q9NU63-1"/>
</dbReference>
<dbReference type="ProteomicsDB" id="82656">
    <molecule id="Q9NU63-2"/>
</dbReference>
<dbReference type="ProteomicsDB" id="82657">
    <molecule id="Q9NU63-3"/>
</dbReference>
<dbReference type="Antibodypedia" id="26080">
    <property type="antibodies" value="216 antibodies from 19 providers"/>
</dbReference>
<dbReference type="DNASU" id="346171"/>
<dbReference type="Ensembl" id="ENST00000376883.2">
    <molecule id="Q9NU63-3"/>
    <property type="protein sequence ID" value="ENSP00000366080.2"/>
    <property type="gene ID" value="ENSG00000204644.10"/>
</dbReference>
<dbReference type="Ensembl" id="ENST00000383628.6">
    <molecule id="Q9NU63-2"/>
    <property type="protein sequence ID" value="ENSP00000373124.2"/>
    <property type="gene ID" value="ENSG00000206510.9"/>
</dbReference>
<dbReference type="Ensembl" id="ENST00000416974.5">
    <molecule id="Q9NU63-2"/>
    <property type="protein sequence ID" value="ENSP00000396462.1"/>
    <property type="gene ID" value="ENSG00000223858.7"/>
</dbReference>
<dbReference type="Ensembl" id="ENST00000435906.5">
    <molecule id="Q9NU63-2"/>
    <property type="protein sequence ID" value="ENSP00000412932.1"/>
    <property type="gene ID" value="ENSG00000226858.7"/>
</dbReference>
<dbReference type="Ensembl" id="ENST00000437216.5">
    <molecule id="Q9NU63-2"/>
    <property type="protein sequence ID" value="ENSP00000398086.1"/>
    <property type="gene ID" value="ENSG00000223852.7"/>
</dbReference>
<dbReference type="Ensembl" id="ENST00000446005.5">
    <molecule id="Q9NU63-2"/>
    <property type="protein sequence ID" value="ENSP00000394222.1"/>
    <property type="gene ID" value="ENSG00000234669.7"/>
</dbReference>
<dbReference type="Ensembl" id="ENST00000448114.5">
    <molecule id="Q9NU63-2"/>
    <property type="protein sequence ID" value="ENSP00000409118.1"/>
    <property type="gene ID" value="ENSG00000232099.7"/>
</dbReference>
<dbReference type="Ensembl" id="ENST00000547542.2">
    <molecule id="Q9NU63-1"/>
    <property type="protein sequence ID" value="ENSP00000447492.2"/>
    <property type="gene ID" value="ENSG00000223852.7"/>
</dbReference>
<dbReference type="Ensembl" id="ENST00000547911.2">
    <molecule id="Q9NU63-1"/>
    <property type="protein sequence ID" value="ENSP00000449556.2"/>
    <property type="gene ID" value="ENSG00000234669.7"/>
</dbReference>
<dbReference type="Ensembl" id="ENST00000548001.2">
    <molecule id="Q9NU63-1"/>
    <property type="protein sequence ID" value="ENSP00000446541.2"/>
    <property type="gene ID" value="ENSG00000232099.7"/>
</dbReference>
<dbReference type="Ensembl" id="ENST00000548337.1">
    <molecule id="Q9NU63-3"/>
    <property type="protein sequence ID" value="ENSP00000449407.1"/>
    <property type="gene ID" value="ENSG00000232099.7"/>
</dbReference>
<dbReference type="Ensembl" id="ENST00000548574.1">
    <molecule id="Q9NU63-3"/>
    <property type="protein sequence ID" value="ENSP00000446798.1"/>
    <property type="gene ID" value="ENSG00000223852.7"/>
</dbReference>
<dbReference type="Ensembl" id="ENST00000548769.1">
    <molecule id="Q9NU63-3"/>
    <property type="protein sequence ID" value="ENSP00000448351.1"/>
    <property type="gene ID" value="ENSG00000206510.9"/>
</dbReference>
<dbReference type="Ensembl" id="ENST00000549167.1">
    <molecule id="Q9NU63-3"/>
    <property type="protein sequence ID" value="ENSP00000449230.1"/>
    <property type="gene ID" value="ENSG00000226858.7"/>
</dbReference>
<dbReference type="Ensembl" id="ENST00000549501.2">
    <molecule id="Q9NU63-1"/>
    <property type="protein sequence ID" value="ENSP00000447698.2"/>
    <property type="gene ID" value="ENSG00000226858.7"/>
</dbReference>
<dbReference type="Ensembl" id="ENST00000552809.1">
    <molecule id="Q9NU63-3"/>
    <property type="protein sequence ID" value="ENSP00000450279.1"/>
    <property type="gene ID" value="ENSG00000223858.7"/>
</dbReference>
<dbReference type="Ensembl" id="ENST00000552898.2">
    <molecule id="Q9NU63-1"/>
    <property type="protein sequence ID" value="ENSP00000450397.2"/>
    <property type="gene ID" value="ENSG00000223858.7"/>
</dbReference>
<dbReference type="Ensembl" id="ENST00000552987.2">
    <molecule id="Q9NU63-1"/>
    <property type="protein sequence ID" value="ENSP00000448634.2"/>
    <property type="gene ID" value="ENSG00000206510.9"/>
</dbReference>
<dbReference type="Ensembl" id="ENST00000553137.1">
    <molecule id="Q9NU63-3"/>
    <property type="protein sequence ID" value="ENSP00000447495.1"/>
    <property type="gene ID" value="ENSG00000234669.7"/>
</dbReference>
<dbReference type="GeneID" id="346171"/>
<dbReference type="KEGG" id="hsa:346171"/>
<dbReference type="MANE-Select" id="ENST00000376883.2">
    <molecule id="Q9NU63-3"/>
    <property type="protein sequence ID" value="ENSP00000366080.2"/>
    <property type="RefSeq nucleotide sequence ID" value="NM_001109809.5"/>
    <property type="RefSeq protein sequence ID" value="NP_001103279.2"/>
</dbReference>
<dbReference type="UCSC" id="uc011dlw.2">
    <molecule id="Q9NU63-1"/>
    <property type="organism name" value="human"/>
</dbReference>
<dbReference type="AGR" id="HGNC:18791"/>
<dbReference type="CTD" id="346171"/>
<dbReference type="DisGeNET" id="346171"/>
<dbReference type="GeneCards" id="ZFP57"/>
<dbReference type="GeneReviews" id="ZFP57"/>
<dbReference type="HGNC" id="HGNC:18791">
    <property type="gene designation" value="ZFP57"/>
</dbReference>
<dbReference type="HPA" id="ENSG00000204644">
    <property type="expression patterns" value="Group enriched (brain, heart muscle)"/>
</dbReference>
<dbReference type="MalaCards" id="ZFP57"/>
<dbReference type="MIM" id="601410">
    <property type="type" value="phenotype"/>
</dbReference>
<dbReference type="MIM" id="612192">
    <property type="type" value="gene"/>
</dbReference>
<dbReference type="neXtProt" id="NX_Q9NU63"/>
<dbReference type="OpenTargets" id="ENSG00000204644"/>
<dbReference type="Orphanet" id="99886">
    <property type="disease" value="Transient neonatal diabetes mellitus"/>
</dbReference>
<dbReference type="PharmGKB" id="PA134937821"/>
<dbReference type="VEuPathDB" id="HostDB:ENSG00000204644"/>
<dbReference type="GeneTree" id="ENSGT00390000002599"/>
<dbReference type="HOGENOM" id="CLU_002678_0_7_1"/>
<dbReference type="InParanoid" id="Q9NU63"/>
<dbReference type="OMA" id="HQQTHWR"/>
<dbReference type="OrthoDB" id="6155966at2759"/>
<dbReference type="PAN-GO" id="Q9NU63">
    <property type="GO annotations" value="3 GO annotations based on evolutionary models"/>
</dbReference>
<dbReference type="PhylomeDB" id="Q9NU63"/>
<dbReference type="TreeFam" id="TF337947"/>
<dbReference type="PathwayCommons" id="Q9NU63"/>
<dbReference type="SignaLink" id="Q9NU63"/>
<dbReference type="BioGRID-ORCS" id="346171">
    <property type="hits" value="31 hits in 1164 CRISPR screens"/>
</dbReference>
<dbReference type="GeneWiki" id="ZFP57"/>
<dbReference type="GenomeRNAi" id="346171"/>
<dbReference type="Pharos" id="Q9NU63">
    <property type="development level" value="Tbio"/>
</dbReference>
<dbReference type="PRO" id="PR:Q9NU63"/>
<dbReference type="Proteomes" id="UP000005640">
    <property type="component" value="Chromosome 6"/>
</dbReference>
<dbReference type="RNAct" id="Q9NU63">
    <property type="molecule type" value="protein"/>
</dbReference>
<dbReference type="Bgee" id="ENSG00000204644">
    <property type="expression patterns" value="Expressed in primordial germ cell in gonad and 86 other cell types or tissues"/>
</dbReference>
<dbReference type="ExpressionAtlas" id="Q9NU63">
    <property type="expression patterns" value="baseline and differential"/>
</dbReference>
<dbReference type="GO" id="GO:0005634">
    <property type="term" value="C:nucleus"/>
    <property type="evidence" value="ECO:0000318"/>
    <property type="project" value="GO_Central"/>
</dbReference>
<dbReference type="GO" id="GO:0003682">
    <property type="term" value="F:chromatin binding"/>
    <property type="evidence" value="ECO:0000314"/>
    <property type="project" value="UniProtKB"/>
</dbReference>
<dbReference type="GO" id="GO:0000981">
    <property type="term" value="F:DNA-binding transcription factor activity, RNA polymerase II-specific"/>
    <property type="evidence" value="ECO:0000318"/>
    <property type="project" value="GO_Central"/>
</dbReference>
<dbReference type="GO" id="GO:0000977">
    <property type="term" value="F:RNA polymerase II transcription regulatory region sequence-specific DNA binding"/>
    <property type="evidence" value="ECO:0000318"/>
    <property type="project" value="GO_Central"/>
</dbReference>
<dbReference type="GO" id="GO:0008270">
    <property type="term" value="F:zinc ion binding"/>
    <property type="evidence" value="ECO:0007669"/>
    <property type="project" value="UniProtKB-KW"/>
</dbReference>
<dbReference type="GO" id="GO:0141068">
    <property type="term" value="P:autosome genomic imprinting"/>
    <property type="evidence" value="ECO:0000315"/>
    <property type="project" value="UniProtKB"/>
</dbReference>
<dbReference type="GO" id="GO:0006357">
    <property type="term" value="P:regulation of transcription by RNA polymerase II"/>
    <property type="evidence" value="ECO:0000318"/>
    <property type="project" value="GO_Central"/>
</dbReference>
<dbReference type="CDD" id="cd07765">
    <property type="entry name" value="KRAB_A-box"/>
    <property type="match status" value="1"/>
</dbReference>
<dbReference type="FunFam" id="3.30.160.60:FF:000965">
    <property type="entry name" value="Neurotrophin receptor-interacting factor homolog"/>
    <property type="match status" value="1"/>
</dbReference>
<dbReference type="FunFam" id="3.30.160.60:FF:002619">
    <property type="entry name" value="ZFP57 zinc finger protein"/>
    <property type="match status" value="1"/>
</dbReference>
<dbReference type="FunFam" id="3.30.160.60:FF:003096">
    <property type="entry name" value="ZFP57 zinc finger protein"/>
    <property type="match status" value="1"/>
</dbReference>
<dbReference type="FunFam" id="3.30.160.60:FF:000671">
    <property type="entry name" value="Zinc finger protein 26"/>
    <property type="match status" value="1"/>
</dbReference>
<dbReference type="Gene3D" id="6.10.140.140">
    <property type="match status" value="1"/>
</dbReference>
<dbReference type="Gene3D" id="3.30.160.60">
    <property type="entry name" value="Classic Zinc Finger"/>
    <property type="match status" value="6"/>
</dbReference>
<dbReference type="InterPro" id="IPR001909">
    <property type="entry name" value="KRAB"/>
</dbReference>
<dbReference type="InterPro" id="IPR036051">
    <property type="entry name" value="KRAB_dom_sf"/>
</dbReference>
<dbReference type="InterPro" id="IPR036236">
    <property type="entry name" value="Znf_C2H2_sf"/>
</dbReference>
<dbReference type="InterPro" id="IPR013087">
    <property type="entry name" value="Znf_C2H2_type"/>
</dbReference>
<dbReference type="PANTHER" id="PTHR24381">
    <property type="entry name" value="ZINC FINGER PROTEIN"/>
    <property type="match status" value="1"/>
</dbReference>
<dbReference type="PANTHER" id="PTHR24381:SF277">
    <property type="entry name" value="ZINC FINGER PROTEIN 57 HOMOLOG"/>
    <property type="match status" value="1"/>
</dbReference>
<dbReference type="Pfam" id="PF01352">
    <property type="entry name" value="KRAB"/>
    <property type="match status" value="1"/>
</dbReference>
<dbReference type="Pfam" id="PF00096">
    <property type="entry name" value="zf-C2H2"/>
    <property type="match status" value="6"/>
</dbReference>
<dbReference type="SMART" id="SM00349">
    <property type="entry name" value="KRAB"/>
    <property type="match status" value="1"/>
</dbReference>
<dbReference type="SMART" id="SM00355">
    <property type="entry name" value="ZnF_C2H2"/>
    <property type="match status" value="7"/>
</dbReference>
<dbReference type="SUPFAM" id="SSF57667">
    <property type="entry name" value="beta-beta-alpha zinc fingers"/>
    <property type="match status" value="4"/>
</dbReference>
<dbReference type="SUPFAM" id="SSF109640">
    <property type="entry name" value="KRAB domain (Kruppel-associated box)"/>
    <property type="match status" value="1"/>
</dbReference>
<dbReference type="PROSITE" id="PS50805">
    <property type="entry name" value="KRAB"/>
    <property type="match status" value="1"/>
</dbReference>
<dbReference type="PROSITE" id="PS00028">
    <property type="entry name" value="ZINC_FINGER_C2H2_1"/>
    <property type="match status" value="6"/>
</dbReference>
<dbReference type="PROSITE" id="PS50157">
    <property type="entry name" value="ZINC_FINGER_C2H2_2"/>
    <property type="match status" value="7"/>
</dbReference>
<keyword id="KW-0025">Alternative splicing</keyword>
<keyword id="KW-0217">Developmental protein</keyword>
<keyword id="KW-0219">Diabetes mellitus</keyword>
<keyword id="KW-0225">Disease variant</keyword>
<keyword id="KW-0238">DNA-binding</keyword>
<keyword id="KW-0479">Metal-binding</keyword>
<keyword id="KW-0539">Nucleus</keyword>
<keyword id="KW-1185">Reference proteome</keyword>
<keyword id="KW-0677">Repeat</keyword>
<keyword id="KW-0678">Repressor</keyword>
<keyword id="KW-0804">Transcription</keyword>
<keyword id="KW-0805">Transcription regulation</keyword>
<keyword id="KW-0862">Zinc</keyword>
<keyword id="KW-0863">Zinc-finger</keyword>
<proteinExistence type="evidence at protein level"/>
<reference key="1">
    <citation type="journal article" date="2003" name="Nature">
        <title>The DNA sequence and analysis of human chromosome 6.</title>
        <authorList>
            <person name="Mungall A.J."/>
            <person name="Palmer S.A."/>
            <person name="Sims S.K."/>
            <person name="Edwards C.A."/>
            <person name="Ashurst J.L."/>
            <person name="Wilming L."/>
            <person name="Jones M.C."/>
            <person name="Horton R."/>
            <person name="Hunt S.E."/>
            <person name="Scott C.E."/>
            <person name="Gilbert J.G.R."/>
            <person name="Clamp M.E."/>
            <person name="Bethel G."/>
            <person name="Milne S."/>
            <person name="Ainscough R."/>
            <person name="Almeida J.P."/>
            <person name="Ambrose K.D."/>
            <person name="Andrews T.D."/>
            <person name="Ashwell R.I.S."/>
            <person name="Babbage A.K."/>
            <person name="Bagguley C.L."/>
            <person name="Bailey J."/>
            <person name="Banerjee R."/>
            <person name="Barker D.J."/>
            <person name="Barlow K.F."/>
            <person name="Bates K."/>
            <person name="Beare D.M."/>
            <person name="Beasley H."/>
            <person name="Beasley O."/>
            <person name="Bird C.P."/>
            <person name="Blakey S.E."/>
            <person name="Bray-Allen S."/>
            <person name="Brook J."/>
            <person name="Brown A.J."/>
            <person name="Brown J.Y."/>
            <person name="Burford D.C."/>
            <person name="Burrill W."/>
            <person name="Burton J."/>
            <person name="Carder C."/>
            <person name="Carter N.P."/>
            <person name="Chapman J.C."/>
            <person name="Clark S.Y."/>
            <person name="Clark G."/>
            <person name="Clee C.M."/>
            <person name="Clegg S."/>
            <person name="Cobley V."/>
            <person name="Collier R.E."/>
            <person name="Collins J.E."/>
            <person name="Colman L.K."/>
            <person name="Corby N.R."/>
            <person name="Coville G.J."/>
            <person name="Culley K.M."/>
            <person name="Dhami P."/>
            <person name="Davies J."/>
            <person name="Dunn M."/>
            <person name="Earthrowl M.E."/>
            <person name="Ellington A.E."/>
            <person name="Evans K.A."/>
            <person name="Faulkner L."/>
            <person name="Francis M.D."/>
            <person name="Frankish A."/>
            <person name="Frankland J."/>
            <person name="French L."/>
            <person name="Garner P."/>
            <person name="Garnett J."/>
            <person name="Ghori M.J."/>
            <person name="Gilby L.M."/>
            <person name="Gillson C.J."/>
            <person name="Glithero R.J."/>
            <person name="Grafham D.V."/>
            <person name="Grant M."/>
            <person name="Gribble S."/>
            <person name="Griffiths C."/>
            <person name="Griffiths M.N.D."/>
            <person name="Hall R."/>
            <person name="Halls K.S."/>
            <person name="Hammond S."/>
            <person name="Harley J.L."/>
            <person name="Hart E.A."/>
            <person name="Heath P.D."/>
            <person name="Heathcott R."/>
            <person name="Holmes S.J."/>
            <person name="Howden P.J."/>
            <person name="Howe K.L."/>
            <person name="Howell G.R."/>
            <person name="Huckle E."/>
            <person name="Humphray S.J."/>
            <person name="Humphries M.D."/>
            <person name="Hunt A.R."/>
            <person name="Johnson C.M."/>
            <person name="Joy A.A."/>
            <person name="Kay M."/>
            <person name="Keenan S.J."/>
            <person name="Kimberley A.M."/>
            <person name="King A."/>
            <person name="Laird G.K."/>
            <person name="Langford C."/>
            <person name="Lawlor S."/>
            <person name="Leongamornlert D.A."/>
            <person name="Leversha M."/>
            <person name="Lloyd C.R."/>
            <person name="Lloyd D.M."/>
            <person name="Loveland J.E."/>
            <person name="Lovell J."/>
            <person name="Martin S."/>
            <person name="Mashreghi-Mohammadi M."/>
            <person name="Maslen G.L."/>
            <person name="Matthews L."/>
            <person name="McCann O.T."/>
            <person name="McLaren S.J."/>
            <person name="McLay K."/>
            <person name="McMurray A."/>
            <person name="Moore M.J.F."/>
            <person name="Mullikin J.C."/>
            <person name="Niblett D."/>
            <person name="Nickerson T."/>
            <person name="Novik K.L."/>
            <person name="Oliver K."/>
            <person name="Overton-Larty E.K."/>
            <person name="Parker A."/>
            <person name="Patel R."/>
            <person name="Pearce A.V."/>
            <person name="Peck A.I."/>
            <person name="Phillimore B.J.C.T."/>
            <person name="Phillips S."/>
            <person name="Plumb R.W."/>
            <person name="Porter K.M."/>
            <person name="Ramsey Y."/>
            <person name="Ranby S.A."/>
            <person name="Rice C.M."/>
            <person name="Ross M.T."/>
            <person name="Searle S.M."/>
            <person name="Sehra H.K."/>
            <person name="Sheridan E."/>
            <person name="Skuce C.D."/>
            <person name="Smith S."/>
            <person name="Smith M."/>
            <person name="Spraggon L."/>
            <person name="Squares S.L."/>
            <person name="Steward C.A."/>
            <person name="Sycamore N."/>
            <person name="Tamlyn-Hall G."/>
            <person name="Tester J."/>
            <person name="Theaker A.J."/>
            <person name="Thomas D.W."/>
            <person name="Thorpe A."/>
            <person name="Tracey A."/>
            <person name="Tromans A."/>
            <person name="Tubby B."/>
            <person name="Wall M."/>
            <person name="Wallis J.M."/>
            <person name="West A.P."/>
            <person name="White S.S."/>
            <person name="Whitehead S.L."/>
            <person name="Whittaker H."/>
            <person name="Wild A."/>
            <person name="Willey D.J."/>
            <person name="Wilmer T.E."/>
            <person name="Wood J.M."/>
            <person name="Wray P.W."/>
            <person name="Wyatt J.C."/>
            <person name="Young L."/>
            <person name="Younger R.M."/>
            <person name="Bentley D.R."/>
            <person name="Coulson A."/>
            <person name="Durbin R.M."/>
            <person name="Hubbard T."/>
            <person name="Sulston J.E."/>
            <person name="Dunham I."/>
            <person name="Rogers J."/>
            <person name="Beck S."/>
        </authorList>
    </citation>
    <scope>NUCLEOTIDE SEQUENCE [LARGE SCALE GENOMIC DNA]</scope>
    <scope>VARIANT VAL-284</scope>
</reference>
<reference key="2">
    <citation type="journal article" date="2004" name="Genome Res.">
        <title>The status, quality, and expansion of the NIH full-length cDNA project: the Mammalian Gene Collection (MGC).</title>
        <authorList>
            <consortium name="The MGC Project Team"/>
        </authorList>
    </citation>
    <scope>NUCLEOTIDE SEQUENCE [LARGE SCALE MRNA] (ISOFORM 3)</scope>
</reference>
<reference key="3">
    <citation type="journal article" date="2019" name="Genes Dev.">
        <title>ZNF445 is a primary regulator of genomic imprinting.</title>
        <authorList>
            <person name="Takahashi N."/>
            <person name="Coluccio A."/>
            <person name="Thorball C.W."/>
            <person name="Planet E."/>
            <person name="Shi H."/>
            <person name="Offner S."/>
            <person name="Turelli P."/>
            <person name="Imbeault M."/>
            <person name="Ferguson-Smith A.C."/>
            <person name="Trono D."/>
        </authorList>
    </citation>
    <scope>FUNCTION</scope>
    <scope>DEVELOPMENTAL STAGE</scope>
</reference>
<reference key="4">
    <citation type="journal article" date="2008" name="Nat. Genet.">
        <title>Hypomethylation of multiple imprinted loci in individuals with transient neonatal diabetes is associated with mutations in ZFP57.</title>
        <authorList>
            <person name="Mackay D.J.G."/>
            <person name="Callaway J.L.A."/>
            <person name="Marks S.M."/>
            <person name="White H.E."/>
            <person name="Acerini C.L."/>
            <person name="Boonen S.E."/>
            <person name="Dayanikli P."/>
            <person name="Firth H.V."/>
            <person name="Goodship J.A."/>
            <person name="Haemers A.P."/>
            <person name="Hahnemann J.M.D."/>
            <person name="Kordonouri O."/>
            <person name="Masoud A.F."/>
            <person name="Oestergaard E."/>
            <person name="Storr J."/>
            <person name="Ellard S."/>
            <person name="Hattersley A.T."/>
            <person name="Robinson D.O."/>
            <person name="Temple I.K."/>
        </authorList>
    </citation>
    <scope>VARIANTS TNDM1 HIS-166; ASN-193 AND ASP-374</scope>
    <scope>FUNCTION</scope>
</reference>
<sequence length="452" mass="51919">MAAGEPRSLLFFQKPVTFEDVAVNFTQEEWDCLDASQRVLYQDVMSETFKNLTSVARIFLHKPELITKLEQEEEQWRETRVLQASQAGPPFFCYTCGKCFSRRSYLYSHQFVHNPKLTNSCSQCGKLFRSPKSLSYHRRMHLGERPFCCTLCDKTYCDASGLSRHRRVHLGYRPHSCSVCGKSFRDQSELKRHQKIHQNQEPVDGNQECTLRIPGTQAEFQTPIARSQRSIQGLLDVNHAPVARSQEPIFRTEGPMAQNQASVLKNQAPVTRTQAPITGTLCQDARSNSHPVKPSRLNVFCCPHCSLTFSKKSYLSRHQKAHLTEPPNYCFHCSKSFSSFSRLVRHQQTHWKQKSYLCPICDLSFGEKEGLMDHWRGYKGKDLCQSSHHKCRVILGQWLGFSHDVPTMAGEEWKHGGDQSPPRIHTPRRRGLREKACKGDKTKEAVSILKHK</sequence>